<feature type="chain" id="PRO_1000088840" description="Aspartate carbamoyltransferase regulatory chain">
    <location>
        <begin position="1"/>
        <end position="153"/>
    </location>
</feature>
<feature type="binding site" evidence="1">
    <location>
        <position position="109"/>
    </location>
    <ligand>
        <name>Zn(2+)</name>
        <dbReference type="ChEBI" id="CHEBI:29105"/>
    </ligand>
</feature>
<feature type="binding site" evidence="1">
    <location>
        <position position="114"/>
    </location>
    <ligand>
        <name>Zn(2+)</name>
        <dbReference type="ChEBI" id="CHEBI:29105"/>
    </ligand>
</feature>
<feature type="binding site" evidence="1">
    <location>
        <position position="138"/>
    </location>
    <ligand>
        <name>Zn(2+)</name>
        <dbReference type="ChEBI" id="CHEBI:29105"/>
    </ligand>
</feature>
<feature type="binding site" evidence="1">
    <location>
        <position position="141"/>
    </location>
    <ligand>
        <name>Zn(2+)</name>
        <dbReference type="ChEBI" id="CHEBI:29105"/>
    </ligand>
</feature>
<protein>
    <recommendedName>
        <fullName evidence="1">Aspartate carbamoyltransferase regulatory chain</fullName>
    </recommendedName>
</protein>
<organism>
    <name type="scientific">Salmonella schwarzengrund (strain CVM19633)</name>
    <dbReference type="NCBI Taxonomy" id="439843"/>
    <lineage>
        <taxon>Bacteria</taxon>
        <taxon>Pseudomonadati</taxon>
        <taxon>Pseudomonadota</taxon>
        <taxon>Gammaproteobacteria</taxon>
        <taxon>Enterobacterales</taxon>
        <taxon>Enterobacteriaceae</taxon>
        <taxon>Salmonella</taxon>
    </lineage>
</organism>
<name>PYRI_SALSV</name>
<accession>B4TT82</accession>
<dbReference type="EMBL" id="CP001127">
    <property type="protein sequence ID" value="ACF91785.1"/>
    <property type="molecule type" value="Genomic_DNA"/>
</dbReference>
<dbReference type="RefSeq" id="WP_000148566.1">
    <property type="nucleotide sequence ID" value="NC_011094.1"/>
</dbReference>
<dbReference type="SMR" id="B4TT82"/>
<dbReference type="KEGG" id="sew:SeSA_A4712"/>
<dbReference type="HOGENOM" id="CLU_128576_0_0_6"/>
<dbReference type="Proteomes" id="UP000001865">
    <property type="component" value="Chromosome"/>
</dbReference>
<dbReference type="GO" id="GO:0009347">
    <property type="term" value="C:aspartate carbamoyltransferase complex"/>
    <property type="evidence" value="ECO:0007669"/>
    <property type="project" value="InterPro"/>
</dbReference>
<dbReference type="GO" id="GO:0046872">
    <property type="term" value="F:metal ion binding"/>
    <property type="evidence" value="ECO:0007669"/>
    <property type="project" value="UniProtKB-KW"/>
</dbReference>
<dbReference type="GO" id="GO:0006207">
    <property type="term" value="P:'de novo' pyrimidine nucleobase biosynthetic process"/>
    <property type="evidence" value="ECO:0007669"/>
    <property type="project" value="InterPro"/>
</dbReference>
<dbReference type="GO" id="GO:0006221">
    <property type="term" value="P:pyrimidine nucleotide biosynthetic process"/>
    <property type="evidence" value="ECO:0007669"/>
    <property type="project" value="UniProtKB-UniRule"/>
</dbReference>
<dbReference type="FunFam" id="2.30.30.20:FF:000001">
    <property type="entry name" value="Aspartate carbamoyltransferase regulatory chain"/>
    <property type="match status" value="1"/>
</dbReference>
<dbReference type="FunFam" id="3.30.70.140:FF:000001">
    <property type="entry name" value="Aspartate carbamoyltransferase regulatory chain"/>
    <property type="match status" value="1"/>
</dbReference>
<dbReference type="Gene3D" id="2.30.30.20">
    <property type="entry name" value="Aspartate carbamoyltransferase regulatory subunit, C-terminal domain"/>
    <property type="match status" value="1"/>
</dbReference>
<dbReference type="Gene3D" id="3.30.70.140">
    <property type="entry name" value="Aspartate carbamoyltransferase regulatory subunit, N-terminal domain"/>
    <property type="match status" value="1"/>
</dbReference>
<dbReference type="HAMAP" id="MF_00002">
    <property type="entry name" value="Asp_carb_tr_reg"/>
    <property type="match status" value="1"/>
</dbReference>
<dbReference type="InterPro" id="IPR020545">
    <property type="entry name" value="Asp_carbamoyltransf_reg_N"/>
</dbReference>
<dbReference type="InterPro" id="IPR002801">
    <property type="entry name" value="Asp_carbamoylTrfase_reg"/>
</dbReference>
<dbReference type="InterPro" id="IPR020542">
    <property type="entry name" value="Asp_carbamoyltrfase_reg_C"/>
</dbReference>
<dbReference type="InterPro" id="IPR036792">
    <property type="entry name" value="Asp_carbatrfase_reg_C_sf"/>
</dbReference>
<dbReference type="InterPro" id="IPR036793">
    <property type="entry name" value="Asp_carbatrfase_reg_N_sf"/>
</dbReference>
<dbReference type="NCBIfam" id="TIGR00240">
    <property type="entry name" value="ATCase_reg"/>
    <property type="match status" value="1"/>
</dbReference>
<dbReference type="PANTHER" id="PTHR35805">
    <property type="entry name" value="ASPARTATE CARBAMOYLTRANSFERASE REGULATORY CHAIN"/>
    <property type="match status" value="1"/>
</dbReference>
<dbReference type="PANTHER" id="PTHR35805:SF1">
    <property type="entry name" value="ASPARTATE CARBAMOYLTRANSFERASE REGULATORY CHAIN"/>
    <property type="match status" value="1"/>
</dbReference>
<dbReference type="Pfam" id="PF01948">
    <property type="entry name" value="PyrI"/>
    <property type="match status" value="1"/>
</dbReference>
<dbReference type="Pfam" id="PF02748">
    <property type="entry name" value="PyrI_C"/>
    <property type="match status" value="1"/>
</dbReference>
<dbReference type="SUPFAM" id="SSF57825">
    <property type="entry name" value="Aspartate carbamoyltransferase, Regulatory-chain, C-terminal domain"/>
    <property type="match status" value="1"/>
</dbReference>
<dbReference type="SUPFAM" id="SSF54893">
    <property type="entry name" value="Aspartate carbamoyltransferase, Regulatory-chain, N-terminal domain"/>
    <property type="match status" value="1"/>
</dbReference>
<keyword id="KW-0479">Metal-binding</keyword>
<keyword id="KW-0665">Pyrimidine biosynthesis</keyword>
<keyword id="KW-0862">Zinc</keyword>
<evidence type="ECO:0000255" key="1">
    <source>
        <dbReference type="HAMAP-Rule" id="MF_00002"/>
    </source>
</evidence>
<gene>
    <name evidence="1" type="primary">pyrI</name>
    <name type="ordered locus">SeSA_A4712</name>
</gene>
<sequence>MTHDNKLQVEAIKCGTVIDHIPAQVGFKLLSLFKLTETDQRITIGLNLPSGEMGRKDLIKIENTFLTDEQVNQLALYAPQATVNRIDNYDVVGKSRPSLPERINNVLVCPNSNCISHAEPVSSSFAVKKRANDIALKCKYCEKEFSHNVVLAN</sequence>
<reference key="1">
    <citation type="journal article" date="2011" name="J. Bacteriol.">
        <title>Comparative genomics of 28 Salmonella enterica isolates: evidence for CRISPR-mediated adaptive sublineage evolution.</title>
        <authorList>
            <person name="Fricke W.F."/>
            <person name="Mammel M.K."/>
            <person name="McDermott P.F."/>
            <person name="Tartera C."/>
            <person name="White D.G."/>
            <person name="Leclerc J.E."/>
            <person name="Ravel J."/>
            <person name="Cebula T.A."/>
        </authorList>
    </citation>
    <scope>NUCLEOTIDE SEQUENCE [LARGE SCALE GENOMIC DNA]</scope>
    <source>
        <strain>CVM19633</strain>
    </source>
</reference>
<proteinExistence type="inferred from homology"/>
<comment type="function">
    <text evidence="1">Involved in allosteric regulation of aspartate carbamoyltransferase.</text>
</comment>
<comment type="cofactor">
    <cofactor evidence="1">
        <name>Zn(2+)</name>
        <dbReference type="ChEBI" id="CHEBI:29105"/>
    </cofactor>
    <text evidence="1">Binds 1 zinc ion per subunit.</text>
</comment>
<comment type="subunit">
    <text evidence="1">Contains catalytic and regulatory chains.</text>
</comment>
<comment type="similarity">
    <text evidence="1">Belongs to the PyrI family.</text>
</comment>